<protein>
    <recommendedName>
        <fullName evidence="10">Golgi-associated RAB2B interactor protein 3</fullName>
    </recommendedName>
    <alternativeName>
        <fullName evidence="10">Protein FAM71B</fullName>
    </alternativeName>
</protein>
<sequence length="665" mass="68885">MPGMKRTMSSECLLPYYTAHSYRSMGVFNTSMGNLQRQLYKGGEYDIFKYAPMFESDFIQISKRGEVIDVHNRVRMVTVCIASTSPVLPLPDVMLLARPAKVCEEHARRARFIKGKGCKPSKTLELTRLLPLKFVKISVHDHEKQQLRLKLATGRTFYLQLCPSSDAREDLFCYWEKLVYLLRPPMTNCISNSTLPTGETSVDTKSTLVSEIRGEGDQNSRPQSSPTVSEATSAAFAGGERTQPAAAAAVTPVSAKARAAGTAGAAAGTAGAAAGTAGPAAGPAAGTAGPAAGTAGAAAGTAGAAAGTAGATAGTAGATAGMAGATAGTAAETAGTAAETAGAARAAGGPMAAAVAAPSAGMTKAETATSPTSGVISLAATTTKPPGSGQVAAAMIGSAAKDQVGGESSKAMALAANITLENVDVALAGAANSISESPPAGGDASGSPDTGLNVAFAGSIKTKSPAEDKPEAPLVSTLQSEGYMCERDGSQKVSQTSSEAKEKRERREKDRTSSRKSSHHRRTGMSRHSSKDKSRKTSSYRSVSGKTREDKGKGHGRLRGKRHSSSHKSESRTGHKTRKNRSPAGLGSVSKRATKITSFFRSFLVRPTPKAGDTSCDRGGVDIVTKLVEKKQDIEAVMEKSKDSEFKDTVISETMEKIILETKSI</sequence>
<dbReference type="EMBL" id="AL662806">
    <property type="status" value="NOT_ANNOTATED_CDS"/>
    <property type="molecule type" value="Genomic_DNA"/>
</dbReference>
<dbReference type="CCDS" id="CCDS24576.1"/>
<dbReference type="RefSeq" id="NP_001013805.1">
    <property type="nucleotide sequence ID" value="NM_001013783.2"/>
</dbReference>
<dbReference type="FunCoup" id="Q5STT6">
    <property type="interactions" value="104"/>
</dbReference>
<dbReference type="STRING" id="10090.ENSMUSP00000055079"/>
<dbReference type="GlyGen" id="Q5STT6">
    <property type="glycosylation" value="3 sites, 1 N-linked glycan (1 site)"/>
</dbReference>
<dbReference type="iPTMnet" id="Q5STT6"/>
<dbReference type="PhosphoSitePlus" id="Q5STT6"/>
<dbReference type="SwissPalm" id="Q5STT6"/>
<dbReference type="PaxDb" id="10090-ENSMUSP00000055079"/>
<dbReference type="ProteomicsDB" id="275581"/>
<dbReference type="Antibodypedia" id="28391">
    <property type="antibodies" value="44 antibodies from 10 providers"/>
</dbReference>
<dbReference type="DNASU" id="432552"/>
<dbReference type="Ensembl" id="ENSMUST00000063166.6">
    <property type="protein sequence ID" value="ENSMUSP00000055079.6"/>
    <property type="gene ID" value="ENSMUSG00000020401.7"/>
</dbReference>
<dbReference type="GeneID" id="432552"/>
<dbReference type="KEGG" id="mmu:432552"/>
<dbReference type="UCSC" id="uc007ioj.2">
    <property type="organism name" value="mouse"/>
</dbReference>
<dbReference type="AGR" id="MGI:3650836"/>
<dbReference type="CTD" id="153745"/>
<dbReference type="MGI" id="MGI:3650836">
    <property type="gene designation" value="Garin3"/>
</dbReference>
<dbReference type="VEuPathDB" id="HostDB:ENSMUSG00000020401"/>
<dbReference type="eggNOG" id="ENOG502S0XQ">
    <property type="taxonomic scope" value="Eukaryota"/>
</dbReference>
<dbReference type="GeneTree" id="ENSGT00940000162063"/>
<dbReference type="HOGENOM" id="CLU_035424_0_0_1"/>
<dbReference type="InParanoid" id="Q5STT6"/>
<dbReference type="OMA" id="TREDLFC"/>
<dbReference type="OrthoDB" id="9836864at2759"/>
<dbReference type="PhylomeDB" id="Q5STT6"/>
<dbReference type="TreeFam" id="TF336050"/>
<dbReference type="BioGRID-ORCS" id="432552">
    <property type="hits" value="3 hits in 76 CRISPR screens"/>
</dbReference>
<dbReference type="ChiTaRS" id="Fam71b">
    <property type="organism name" value="mouse"/>
</dbReference>
<dbReference type="PRO" id="PR:Q5STT6"/>
<dbReference type="Proteomes" id="UP000000589">
    <property type="component" value="Chromosome 11"/>
</dbReference>
<dbReference type="RNAct" id="Q5STT6">
    <property type="molecule type" value="protein"/>
</dbReference>
<dbReference type="Bgee" id="ENSMUSG00000020401">
    <property type="expression patterns" value="Expressed in seminiferous tubule of testis and 16 other cell types or tissues"/>
</dbReference>
<dbReference type="GO" id="GO:0015030">
    <property type="term" value="C:Cajal body"/>
    <property type="evidence" value="ECO:0007669"/>
    <property type="project" value="UniProtKB-SubCell"/>
</dbReference>
<dbReference type="GO" id="GO:0005794">
    <property type="term" value="C:Golgi apparatus"/>
    <property type="evidence" value="ECO:0000314"/>
    <property type="project" value="UniProtKB"/>
</dbReference>
<dbReference type="GO" id="GO:0061827">
    <property type="term" value="C:sperm head"/>
    <property type="evidence" value="ECO:0000315"/>
    <property type="project" value="MGI"/>
</dbReference>
<dbReference type="GO" id="GO:0001675">
    <property type="term" value="P:acrosome assembly"/>
    <property type="evidence" value="ECO:0000315"/>
    <property type="project" value="MGI"/>
</dbReference>
<dbReference type="GO" id="GO:0007339">
    <property type="term" value="P:binding of sperm to zona pellucida"/>
    <property type="evidence" value="ECO:0000315"/>
    <property type="project" value="MGI"/>
</dbReference>
<dbReference type="GO" id="GO:0000902">
    <property type="term" value="P:cell morphogenesis"/>
    <property type="evidence" value="ECO:0000315"/>
    <property type="project" value="MGI"/>
</dbReference>
<dbReference type="GO" id="GO:0030317">
    <property type="term" value="P:flagellated sperm motility"/>
    <property type="evidence" value="ECO:0000315"/>
    <property type="project" value="MGI"/>
</dbReference>
<dbReference type="GO" id="GO:0007341">
    <property type="term" value="P:penetration of zona pellucida"/>
    <property type="evidence" value="ECO:0000315"/>
    <property type="project" value="MGI"/>
</dbReference>
<dbReference type="GO" id="GO:0007338">
    <property type="term" value="P:single fertilization"/>
    <property type="evidence" value="ECO:0000315"/>
    <property type="project" value="MGI"/>
</dbReference>
<dbReference type="GO" id="GO:0007286">
    <property type="term" value="P:spermatid development"/>
    <property type="evidence" value="ECO:0000270"/>
    <property type="project" value="MGI"/>
</dbReference>
<dbReference type="InterPro" id="IPR022168">
    <property type="entry name" value="GARIL-like_Rab2B-bd"/>
</dbReference>
<dbReference type="PANTHER" id="PTHR22574">
    <property type="match status" value="1"/>
</dbReference>
<dbReference type="PANTHER" id="PTHR22574:SF2">
    <property type="entry name" value="GOLGI-ASSOCIATED RAB2 INTERACTOR PROTEIN 3"/>
    <property type="match status" value="1"/>
</dbReference>
<dbReference type="Pfam" id="PF12480">
    <property type="entry name" value="GARIL_Rab2_bd"/>
    <property type="match status" value="1"/>
</dbReference>
<comment type="function">
    <text evidence="3">May be involved in RNA biogenesis.</text>
</comment>
<comment type="subunit">
    <text evidence="1 6">Interacts (via N-terminus) with RAB2B (in GTP-bound form) (PubMed:18256213). Interacts with FRG1.</text>
</comment>
<comment type="subcellular location">
    <subcellularLocation>
        <location evidence="9">Golgi apparatus</location>
    </subcellularLocation>
    <subcellularLocation>
        <location evidence="3">Nucleus</location>
        <location evidence="3">Cajal body</location>
    </subcellularLocation>
</comment>
<comment type="tissue specificity">
    <text evidence="7">Expressed in adult spermatocytes and spermatids.</text>
</comment>
<comment type="similarity">
    <text evidence="8">Belongs to the GARIN family.</text>
</comment>
<comment type="caution">
    <text evidence="8">It is uncertain whether Met-1 or Met-8 is the initiator.</text>
</comment>
<organism>
    <name type="scientific">Mus musculus</name>
    <name type="common">Mouse</name>
    <dbReference type="NCBI Taxonomy" id="10090"/>
    <lineage>
        <taxon>Eukaryota</taxon>
        <taxon>Metazoa</taxon>
        <taxon>Chordata</taxon>
        <taxon>Craniata</taxon>
        <taxon>Vertebrata</taxon>
        <taxon>Euteleostomi</taxon>
        <taxon>Mammalia</taxon>
        <taxon>Eutheria</taxon>
        <taxon>Euarchontoglires</taxon>
        <taxon>Glires</taxon>
        <taxon>Rodentia</taxon>
        <taxon>Myomorpha</taxon>
        <taxon>Muroidea</taxon>
        <taxon>Muridae</taxon>
        <taxon>Murinae</taxon>
        <taxon>Mus</taxon>
        <taxon>Mus</taxon>
    </lineage>
</organism>
<evidence type="ECO:0000250" key="1"/>
<evidence type="ECO:0000250" key="2">
    <source>
        <dbReference type="UniProtKB" id="Q66H38"/>
    </source>
</evidence>
<evidence type="ECO:0000250" key="3">
    <source>
        <dbReference type="UniProtKB" id="Q8TC56"/>
    </source>
</evidence>
<evidence type="ECO:0000255" key="4"/>
<evidence type="ECO:0000256" key="5">
    <source>
        <dbReference type="SAM" id="MobiDB-lite"/>
    </source>
</evidence>
<evidence type="ECO:0000269" key="6">
    <source>
    </source>
</evidence>
<evidence type="ECO:0000269" key="7">
    <source>
    </source>
</evidence>
<evidence type="ECO:0000305" key="8"/>
<evidence type="ECO:0000305" key="9">
    <source>
    </source>
</evidence>
<evidence type="ECO:0000312" key="10">
    <source>
        <dbReference type="MGI" id="MGI:3650836"/>
    </source>
</evidence>
<reference key="1">
    <citation type="journal article" date="2009" name="PLoS Biol.">
        <title>Lineage-specific biology revealed by a finished genome assembly of the mouse.</title>
        <authorList>
            <person name="Church D.M."/>
            <person name="Goodstadt L."/>
            <person name="Hillier L.W."/>
            <person name="Zody M.C."/>
            <person name="Goldstein S."/>
            <person name="She X."/>
            <person name="Bult C.J."/>
            <person name="Agarwala R."/>
            <person name="Cherry J.L."/>
            <person name="DiCuccio M."/>
            <person name="Hlavina W."/>
            <person name="Kapustin Y."/>
            <person name="Meric P."/>
            <person name="Maglott D."/>
            <person name="Birtle Z."/>
            <person name="Marques A.C."/>
            <person name="Graves T."/>
            <person name="Zhou S."/>
            <person name="Teague B."/>
            <person name="Potamousis K."/>
            <person name="Churas C."/>
            <person name="Place M."/>
            <person name="Herschleb J."/>
            <person name="Runnheim R."/>
            <person name="Forrest D."/>
            <person name="Amos-Landgraf J."/>
            <person name="Schwartz D.C."/>
            <person name="Cheng Z."/>
            <person name="Lindblad-Toh K."/>
            <person name="Eichler E.E."/>
            <person name="Ponting C.P."/>
        </authorList>
    </citation>
    <scope>NUCLEOTIDE SEQUENCE [LARGE SCALE GENOMIC DNA]</scope>
    <source>
        <strain>C57BL/6J</strain>
    </source>
</reference>
<reference key="2">
    <citation type="journal article" date="2008" name="Mol. Cell. Proteomics">
        <title>Large scale screening for novel rab effectors reveals unexpected broad Rab binding specificity.</title>
        <authorList>
            <person name="Fukuda M."/>
            <person name="Kanno E."/>
            <person name="Ishibashi K."/>
            <person name="Itoh T."/>
        </authorList>
    </citation>
    <scope>INTERACTION WITH RAB2B</scope>
    <scope>SUBCELLULAR LOCATION</scope>
    <source>
        <strain>BALB/cJ</strain>
    </source>
</reference>
<reference key="3">
    <citation type="journal article" date="2015" name="Biol. Reprod.">
        <title>Combining RNA and protein profiling data with network interactions identifies genes associated with spermatogenesis in mouse and human.</title>
        <authorList>
            <person name="Petit F.G."/>
            <person name="Kervarrec C."/>
            <person name="Jamin S.P."/>
            <person name="Smagulova F."/>
            <person name="Hao C."/>
            <person name="Becker E."/>
            <person name="Jegou B."/>
            <person name="Chalmel F."/>
            <person name="Primig M."/>
        </authorList>
    </citation>
    <scope>TISSUE SPECIFICITY</scope>
</reference>
<keyword id="KW-0333">Golgi apparatus</keyword>
<keyword id="KW-0539">Nucleus</keyword>
<keyword id="KW-0597">Phosphoprotein</keyword>
<keyword id="KW-1185">Reference proteome</keyword>
<feature type="chain" id="PRO_0000285644" description="Golgi-associated RAB2B interactor protein 3">
    <location>
        <begin position="1"/>
        <end position="665"/>
    </location>
</feature>
<feature type="region of interest" description="Disordered" evidence="5">
    <location>
        <begin position="211"/>
        <end position="240"/>
    </location>
</feature>
<feature type="region of interest" description="Disordered" evidence="5">
    <location>
        <begin position="272"/>
        <end position="296"/>
    </location>
</feature>
<feature type="region of interest" description="Disordered" evidence="5">
    <location>
        <begin position="480"/>
        <end position="590"/>
    </location>
</feature>
<feature type="short sequence motif" description="Bipartite nuclear localization signal" evidence="4">
    <location>
        <begin position="515"/>
        <end position="531"/>
    </location>
</feature>
<feature type="compositionally biased region" description="Polar residues" evidence="5">
    <location>
        <begin position="219"/>
        <end position="232"/>
    </location>
</feature>
<feature type="compositionally biased region" description="Basic and acidic residues" evidence="5">
    <location>
        <begin position="499"/>
        <end position="513"/>
    </location>
</feature>
<feature type="compositionally biased region" description="Basic residues" evidence="5">
    <location>
        <begin position="514"/>
        <end position="538"/>
    </location>
</feature>
<feature type="compositionally biased region" description="Basic residues" evidence="5">
    <location>
        <begin position="554"/>
        <end position="566"/>
    </location>
</feature>
<feature type="modified residue" description="Phosphoserine" evidence="2">
    <location>
        <position position="652"/>
    </location>
</feature>
<name>GAR3_MOUSE</name>
<accession>Q5STT6</accession>
<gene>
    <name evidence="10" type="primary">Garin3</name>
    <name evidence="10" type="synonym">Fam71b</name>
</gene>
<proteinExistence type="evidence at protein level"/>